<reference key="1">
    <citation type="journal article" date="2009" name="Proc. Natl. Acad. Sci. U.S.A.">
        <title>Characterizing a model human gut microbiota composed of members of its two dominant bacterial phyla.</title>
        <authorList>
            <person name="Mahowald M.A."/>
            <person name="Rey F.E."/>
            <person name="Seedorf H."/>
            <person name="Turnbaugh P.J."/>
            <person name="Fulton R.S."/>
            <person name="Wollam A."/>
            <person name="Shah N."/>
            <person name="Wang C."/>
            <person name="Magrini V."/>
            <person name="Wilson R.K."/>
            <person name="Cantarel B.L."/>
            <person name="Coutinho P.M."/>
            <person name="Henrissat B."/>
            <person name="Crock L.W."/>
            <person name="Russell A."/>
            <person name="Verberkmoes N.C."/>
            <person name="Hettich R.L."/>
            <person name="Gordon J.I."/>
        </authorList>
    </citation>
    <scope>NUCLEOTIDE SEQUENCE [LARGE SCALE GENOMIC DNA]</scope>
    <source>
        <strain>ATCC 33656 / DSM 3377 / JCM 17463 / KCTC 5835 / LMG 30912 / VPI 0990</strain>
    </source>
</reference>
<protein>
    <recommendedName>
        <fullName evidence="1">ATP-dependent Clp protease proteolytic subunit</fullName>
        <ecNumber evidence="1">3.4.21.92</ecNumber>
    </recommendedName>
    <alternativeName>
        <fullName evidence="1">Endopeptidase Clp</fullName>
    </alternativeName>
</protein>
<name>CLPP_AGARV</name>
<gene>
    <name evidence="1" type="primary">clpP</name>
    <name type="ordered locus">EUBREC_0989</name>
</gene>
<evidence type="ECO:0000255" key="1">
    <source>
        <dbReference type="HAMAP-Rule" id="MF_00444"/>
    </source>
</evidence>
<organism>
    <name type="scientific">Agathobacter rectalis (strain ATCC 33656 / DSM 3377 / JCM 17463 / KCTC 5835 / VPI 0990)</name>
    <name type="common">Eubacterium rectale</name>
    <dbReference type="NCBI Taxonomy" id="515619"/>
    <lineage>
        <taxon>Bacteria</taxon>
        <taxon>Bacillati</taxon>
        <taxon>Bacillota</taxon>
        <taxon>Clostridia</taxon>
        <taxon>Lachnospirales</taxon>
        <taxon>Lachnospiraceae</taxon>
        <taxon>Agathobacter</taxon>
    </lineage>
</organism>
<dbReference type="EC" id="3.4.21.92" evidence="1"/>
<dbReference type="EMBL" id="CP001107">
    <property type="protein sequence ID" value="ACR74751.1"/>
    <property type="molecule type" value="Genomic_DNA"/>
</dbReference>
<dbReference type="RefSeq" id="WP_012741852.1">
    <property type="nucleotide sequence ID" value="NZ_CAXSYD010000005.1"/>
</dbReference>
<dbReference type="SMR" id="C4ZGF4"/>
<dbReference type="STRING" id="515619.EUBREC_0989"/>
<dbReference type="MEROPS" id="S14.001"/>
<dbReference type="PaxDb" id="515619-EUBREC_0989"/>
<dbReference type="GeneID" id="86987848"/>
<dbReference type="KEGG" id="ere:EUBREC_0989"/>
<dbReference type="HOGENOM" id="CLU_058707_3_2_9"/>
<dbReference type="Proteomes" id="UP000001477">
    <property type="component" value="Chromosome"/>
</dbReference>
<dbReference type="GO" id="GO:0005737">
    <property type="term" value="C:cytoplasm"/>
    <property type="evidence" value="ECO:0007669"/>
    <property type="project" value="UniProtKB-SubCell"/>
</dbReference>
<dbReference type="GO" id="GO:0009368">
    <property type="term" value="C:endopeptidase Clp complex"/>
    <property type="evidence" value="ECO:0007669"/>
    <property type="project" value="TreeGrafter"/>
</dbReference>
<dbReference type="GO" id="GO:0004176">
    <property type="term" value="F:ATP-dependent peptidase activity"/>
    <property type="evidence" value="ECO:0007669"/>
    <property type="project" value="InterPro"/>
</dbReference>
<dbReference type="GO" id="GO:0051117">
    <property type="term" value="F:ATPase binding"/>
    <property type="evidence" value="ECO:0007669"/>
    <property type="project" value="TreeGrafter"/>
</dbReference>
<dbReference type="GO" id="GO:0004252">
    <property type="term" value="F:serine-type endopeptidase activity"/>
    <property type="evidence" value="ECO:0007669"/>
    <property type="project" value="UniProtKB-UniRule"/>
</dbReference>
<dbReference type="GO" id="GO:0006515">
    <property type="term" value="P:protein quality control for misfolded or incompletely synthesized proteins"/>
    <property type="evidence" value="ECO:0007669"/>
    <property type="project" value="TreeGrafter"/>
</dbReference>
<dbReference type="CDD" id="cd07017">
    <property type="entry name" value="S14_ClpP_2"/>
    <property type="match status" value="1"/>
</dbReference>
<dbReference type="FunFam" id="3.90.226.10:FF:000001">
    <property type="entry name" value="ATP-dependent Clp protease proteolytic subunit"/>
    <property type="match status" value="1"/>
</dbReference>
<dbReference type="Gene3D" id="3.90.226.10">
    <property type="entry name" value="2-enoyl-CoA Hydratase, Chain A, domain 1"/>
    <property type="match status" value="1"/>
</dbReference>
<dbReference type="HAMAP" id="MF_00444">
    <property type="entry name" value="ClpP"/>
    <property type="match status" value="1"/>
</dbReference>
<dbReference type="InterPro" id="IPR001907">
    <property type="entry name" value="ClpP"/>
</dbReference>
<dbReference type="InterPro" id="IPR029045">
    <property type="entry name" value="ClpP/crotonase-like_dom_sf"/>
</dbReference>
<dbReference type="InterPro" id="IPR023562">
    <property type="entry name" value="ClpP/TepA"/>
</dbReference>
<dbReference type="InterPro" id="IPR033135">
    <property type="entry name" value="ClpP_His_AS"/>
</dbReference>
<dbReference type="InterPro" id="IPR018215">
    <property type="entry name" value="ClpP_Ser_AS"/>
</dbReference>
<dbReference type="NCBIfam" id="TIGR00493">
    <property type="entry name" value="clpP"/>
    <property type="match status" value="1"/>
</dbReference>
<dbReference type="NCBIfam" id="NF001368">
    <property type="entry name" value="PRK00277.1"/>
    <property type="match status" value="1"/>
</dbReference>
<dbReference type="NCBIfam" id="NF009205">
    <property type="entry name" value="PRK12553.1"/>
    <property type="match status" value="1"/>
</dbReference>
<dbReference type="PANTHER" id="PTHR10381">
    <property type="entry name" value="ATP-DEPENDENT CLP PROTEASE PROTEOLYTIC SUBUNIT"/>
    <property type="match status" value="1"/>
</dbReference>
<dbReference type="PANTHER" id="PTHR10381:SF70">
    <property type="entry name" value="ATP-DEPENDENT CLP PROTEASE PROTEOLYTIC SUBUNIT"/>
    <property type="match status" value="1"/>
</dbReference>
<dbReference type="Pfam" id="PF00574">
    <property type="entry name" value="CLP_protease"/>
    <property type="match status" value="1"/>
</dbReference>
<dbReference type="PRINTS" id="PR00127">
    <property type="entry name" value="CLPPROTEASEP"/>
</dbReference>
<dbReference type="SUPFAM" id="SSF52096">
    <property type="entry name" value="ClpP/crotonase"/>
    <property type="match status" value="1"/>
</dbReference>
<dbReference type="PROSITE" id="PS00382">
    <property type="entry name" value="CLP_PROTEASE_HIS"/>
    <property type="match status" value="1"/>
</dbReference>
<dbReference type="PROSITE" id="PS00381">
    <property type="entry name" value="CLP_PROTEASE_SER"/>
    <property type="match status" value="1"/>
</dbReference>
<sequence>MSLVPYVIEQTSRGERNYDIYSRLLKDRIIFLGEEVNETTASLVVAQLLFLESEDPNKDIHLYINSPGGMVTAGLAIYDTMQYIKCDVSTICIGLAASMGAFLLAGGAKGKRYALPNAEIMIHQPSGGAKGQATEIQIAAENILKTKKRLNEILAANTGKPYETIAADTERDNYMSAQEAAEYGLIDSVITNR</sequence>
<keyword id="KW-0963">Cytoplasm</keyword>
<keyword id="KW-0378">Hydrolase</keyword>
<keyword id="KW-0645">Protease</keyword>
<keyword id="KW-0720">Serine protease</keyword>
<feature type="chain" id="PRO_1000206152" description="ATP-dependent Clp protease proteolytic subunit">
    <location>
        <begin position="1"/>
        <end position="193"/>
    </location>
</feature>
<feature type="active site" description="Nucleophile" evidence="1">
    <location>
        <position position="98"/>
    </location>
</feature>
<feature type="active site" evidence="1">
    <location>
        <position position="123"/>
    </location>
</feature>
<proteinExistence type="inferred from homology"/>
<accession>C4ZGF4</accession>
<comment type="function">
    <text evidence="1">Cleaves peptides in various proteins in a process that requires ATP hydrolysis. Has a chymotrypsin-like activity. Plays a major role in the degradation of misfolded proteins.</text>
</comment>
<comment type="catalytic activity">
    <reaction evidence="1">
        <text>Hydrolysis of proteins to small peptides in the presence of ATP and magnesium. alpha-casein is the usual test substrate. In the absence of ATP, only oligopeptides shorter than five residues are hydrolyzed (such as succinyl-Leu-Tyr-|-NHMec, and Leu-Tyr-Leu-|-Tyr-Trp, in which cleavage of the -Tyr-|-Leu- and -Tyr-|-Trp bonds also occurs).</text>
        <dbReference type="EC" id="3.4.21.92"/>
    </reaction>
</comment>
<comment type="subunit">
    <text evidence="1">Fourteen ClpP subunits assemble into 2 heptameric rings which stack back to back to give a disk-like structure with a central cavity, resembling the structure of eukaryotic proteasomes.</text>
</comment>
<comment type="subcellular location">
    <subcellularLocation>
        <location evidence="1">Cytoplasm</location>
    </subcellularLocation>
</comment>
<comment type="similarity">
    <text evidence="1">Belongs to the peptidase S14 family.</text>
</comment>